<proteinExistence type="inferred from homology"/>
<reference key="1">
    <citation type="journal article" date="2007" name="PLoS ONE">
        <title>Analysis of the neurotoxin complex genes in Clostridium botulinum A1-A4 and B1 strains: BoNT/A3, /Ba4 and /B1 clusters are located within plasmids.</title>
        <authorList>
            <person name="Smith T.J."/>
            <person name="Hill K.K."/>
            <person name="Foley B.T."/>
            <person name="Detter J.C."/>
            <person name="Munk A.C."/>
            <person name="Bruce D.C."/>
            <person name="Doggett N.A."/>
            <person name="Smith L.A."/>
            <person name="Marks J.D."/>
            <person name="Xie G."/>
            <person name="Brettin T.S."/>
        </authorList>
    </citation>
    <scope>NUCLEOTIDE SEQUENCE [LARGE SCALE GENOMIC DNA]</scope>
    <source>
        <strain>Loch Maree / Type A3</strain>
    </source>
</reference>
<accession>B1L1L6</accession>
<keyword id="KW-1003">Cell membrane</keyword>
<keyword id="KW-0472">Membrane</keyword>
<keyword id="KW-0812">Transmembrane</keyword>
<keyword id="KW-1133">Transmembrane helix</keyword>
<evidence type="ECO:0000255" key="1">
    <source>
        <dbReference type="HAMAP-Rule" id="MF_01600"/>
    </source>
</evidence>
<sequence length="893" mass="104147">MKNRKALFIPLFIIILFIAFFNKIINFIINIKWFKEVNYLTIYFTKMRAIIILMIPIFIIFFISIWMYYKSLMINKNKSVVDIGLNKNNYGKKLFFIFNFIVSIFLAYIFSSSYWYRILQFNNSVDFNVKDPIFFKDVSFYVFKLPLFESLYKVIISLLLFLVITTFIAYFILEAKYKIQSKKDINLKNINHGIKSFAGKQLAIVSGLIILFISFGHLIKIWNLVYSSNGVSFGASYTDVHATLLFYKIIVVITLISSIVTLLSIVKGKFKPVSICIGITIFLIVSQNIASFLVQNFIVKSNEKTLEQPYIKNNIDLTRKAFALDDIEIRDFDIKNDLQKQDIADNKASIDNIRINSFKPTLEFYNQVQIIRYYYTFNDIDIDRYNINGKYNQVFLAAREIDTDALNPNTWQNRHLIYTHGFGAVMNKVNSVTSEGQPDFVIKDIPPYNKTNIKLTNPRIYFGEKTNDYVIVNTKINEFDYPKEDSNKTNKYNGHAGIKMSFINRLLFAINKKDINFLLSKDIKKDSKIIINRNIVERAKKIAPFLTYDSDPYMVIYNGKIYWIIDAYTTTNRYPYSEPYDGINYIRNSAKVVIDSVDGDTNFYITDKKDPIVNNYAKIFKGLFKEEKDAPKEIREHFRYPKDLFSIQSKVLGKYHVKDPGVFYNGEDLWEVSKDQKHVEGETNTNDAPYIIMKLPDQNKEEMVLLNYFNVMKKDNMIALFGARMDGEQYGKKILYKLPSDKTVYSPYLFKQKINQDTNISKELSLWNREGSQVQYGDTIILPIKNSLLYIEPLYLRASGKNSIPEMKRVILSYNDRLVLSSSIQEGIKEIFNSKDNKINDKNEKDSTKTIDDSKLKKAQEYYNKAIEAQKNGDWTKYGEDINELGNILNNIK</sequence>
<organism>
    <name type="scientific">Clostridium botulinum (strain Loch Maree / Type A3)</name>
    <dbReference type="NCBI Taxonomy" id="498214"/>
    <lineage>
        <taxon>Bacteria</taxon>
        <taxon>Bacillati</taxon>
        <taxon>Bacillota</taxon>
        <taxon>Clostridia</taxon>
        <taxon>Eubacteriales</taxon>
        <taxon>Clostridiaceae</taxon>
        <taxon>Clostridium</taxon>
    </lineage>
</organism>
<gene>
    <name type="ordered locus">CLK_3152</name>
</gene>
<comment type="subcellular location">
    <subcellularLocation>
        <location evidence="1">Cell membrane</location>
        <topology evidence="1">Multi-pass membrane protein</topology>
    </subcellularLocation>
</comment>
<comment type="similarity">
    <text evidence="1">Belongs to the UPF0182 family.</text>
</comment>
<feature type="chain" id="PRO_0000335543" description="UPF0182 protein CLK_3152">
    <location>
        <begin position="1"/>
        <end position="893"/>
    </location>
</feature>
<feature type="transmembrane region" description="Helical" evidence="1">
    <location>
        <begin position="9"/>
        <end position="29"/>
    </location>
</feature>
<feature type="transmembrane region" description="Helical" evidence="1">
    <location>
        <begin position="49"/>
        <end position="69"/>
    </location>
</feature>
<feature type="transmembrane region" description="Helical" evidence="1">
    <location>
        <begin position="94"/>
        <end position="114"/>
    </location>
</feature>
<feature type="transmembrane region" description="Helical" evidence="1">
    <location>
        <begin position="154"/>
        <end position="174"/>
    </location>
</feature>
<feature type="transmembrane region" description="Helical" evidence="1">
    <location>
        <begin position="202"/>
        <end position="222"/>
    </location>
</feature>
<feature type="transmembrane region" description="Helical" evidence="1">
    <location>
        <begin position="246"/>
        <end position="266"/>
    </location>
</feature>
<feature type="transmembrane region" description="Helical" evidence="1">
    <location>
        <begin position="273"/>
        <end position="293"/>
    </location>
</feature>
<protein>
    <recommendedName>
        <fullName evidence="1">UPF0182 protein CLK_3152</fullName>
    </recommendedName>
</protein>
<dbReference type="EMBL" id="CP000962">
    <property type="protein sequence ID" value="ACA53906.1"/>
    <property type="molecule type" value="Genomic_DNA"/>
</dbReference>
<dbReference type="RefSeq" id="WP_012342080.1">
    <property type="nucleotide sequence ID" value="NC_010520.1"/>
</dbReference>
<dbReference type="SMR" id="B1L1L6"/>
<dbReference type="KEGG" id="cbl:CLK_3152"/>
<dbReference type="HOGENOM" id="CLU_007733_0_0_9"/>
<dbReference type="GO" id="GO:0005576">
    <property type="term" value="C:extracellular region"/>
    <property type="evidence" value="ECO:0007669"/>
    <property type="project" value="TreeGrafter"/>
</dbReference>
<dbReference type="GO" id="GO:0005886">
    <property type="term" value="C:plasma membrane"/>
    <property type="evidence" value="ECO:0007669"/>
    <property type="project" value="UniProtKB-SubCell"/>
</dbReference>
<dbReference type="HAMAP" id="MF_01600">
    <property type="entry name" value="UPF0182"/>
    <property type="match status" value="1"/>
</dbReference>
<dbReference type="InterPro" id="IPR005372">
    <property type="entry name" value="UPF0182"/>
</dbReference>
<dbReference type="NCBIfam" id="NF000825">
    <property type="entry name" value="PRK00068.1"/>
    <property type="match status" value="1"/>
</dbReference>
<dbReference type="PANTHER" id="PTHR39344">
    <property type="entry name" value="UPF0182 PROTEIN SLL1060"/>
    <property type="match status" value="1"/>
</dbReference>
<dbReference type="PANTHER" id="PTHR39344:SF1">
    <property type="entry name" value="UPF0182 PROTEIN SLL1060"/>
    <property type="match status" value="1"/>
</dbReference>
<dbReference type="Pfam" id="PF03699">
    <property type="entry name" value="UPF0182"/>
    <property type="match status" value="1"/>
</dbReference>
<name>Y3152_CLOBM</name>